<organism>
    <name type="scientific">Pseudomonas sp. (strain NS671)</name>
    <dbReference type="NCBI Taxonomy" id="29441"/>
    <lineage>
        <taxon>Bacteria</taxon>
        <taxon>Pseudomonadati</taxon>
        <taxon>Pseudomonadota</taxon>
    </lineage>
</organism>
<proteinExistence type="predicted"/>
<reference key="1">
    <citation type="journal article" date="1992" name="J. Bacteriol.">
        <title>Cloning and sequencing of the genes involved in the conversion of 5-substituted hydantoins to the corresponding L-amino acids from the native plasmid of Pseudomonas sp. strain NS671.</title>
        <authorList>
            <person name="Watabe K."/>
        </authorList>
    </citation>
    <scope>NUCLEOTIDE SEQUENCE [GENOMIC DNA]</scope>
</reference>
<feature type="chain" id="PRO_0000081387" description="Uncharacterized protein in HyuA 5'region">
    <location>
        <begin position="1" status="less than"/>
        <end position="295"/>
    </location>
</feature>
<feature type="domain" description="Sigma-54 factor interaction" evidence="1">
    <location>
        <begin position="4"/>
        <end position="233"/>
    </location>
</feature>
<feature type="non-terminal residue">
    <location>
        <position position="1"/>
    </location>
</feature>
<keyword id="KW-0067">ATP-binding</keyword>
<keyword id="KW-0547">Nucleotide-binding</keyword>
<keyword id="KW-0614">Plasmid</keyword>
<keyword id="KW-0902">Two-component regulatory system</keyword>
<dbReference type="EMBL" id="D10494">
    <property type="protein sequence ID" value="BAA01376.1"/>
    <property type="molecule type" value="Genomic_DNA"/>
</dbReference>
<dbReference type="EMBL" id="M72717">
    <property type="protein sequence ID" value="AAA25844.1"/>
    <property type="molecule type" value="Genomic_DNA"/>
</dbReference>
<dbReference type="SMR" id="Q01265"/>
<dbReference type="GO" id="GO:0005524">
    <property type="term" value="F:ATP binding"/>
    <property type="evidence" value="ECO:0007669"/>
    <property type="project" value="UniProtKB-KW"/>
</dbReference>
<dbReference type="GO" id="GO:0016887">
    <property type="term" value="F:ATP hydrolysis activity"/>
    <property type="evidence" value="ECO:0007669"/>
    <property type="project" value="InterPro"/>
</dbReference>
<dbReference type="GO" id="GO:0000160">
    <property type="term" value="P:phosphorelay signal transduction system"/>
    <property type="evidence" value="ECO:0007669"/>
    <property type="project" value="UniProtKB-KW"/>
</dbReference>
<dbReference type="GO" id="GO:0006355">
    <property type="term" value="P:regulation of DNA-templated transcription"/>
    <property type="evidence" value="ECO:0007669"/>
    <property type="project" value="InterPro"/>
</dbReference>
<dbReference type="CDD" id="cd00009">
    <property type="entry name" value="AAA"/>
    <property type="match status" value="1"/>
</dbReference>
<dbReference type="FunFam" id="3.40.50.300:FF:000006">
    <property type="entry name" value="DNA-binding transcriptional regulator NtrC"/>
    <property type="match status" value="1"/>
</dbReference>
<dbReference type="Gene3D" id="1.10.8.60">
    <property type="match status" value="1"/>
</dbReference>
<dbReference type="Gene3D" id="3.40.50.300">
    <property type="entry name" value="P-loop containing nucleotide triphosphate hydrolases"/>
    <property type="match status" value="1"/>
</dbReference>
<dbReference type="InterPro" id="IPR003593">
    <property type="entry name" value="AAA+_ATPase"/>
</dbReference>
<dbReference type="InterPro" id="IPR027417">
    <property type="entry name" value="P-loop_NTPase"/>
</dbReference>
<dbReference type="InterPro" id="IPR002078">
    <property type="entry name" value="Sigma_54_int"/>
</dbReference>
<dbReference type="InterPro" id="IPR025662">
    <property type="entry name" value="Sigma_54_int_dom_ATP-bd_1"/>
</dbReference>
<dbReference type="InterPro" id="IPR025943">
    <property type="entry name" value="Sigma_54_int_dom_ATP-bd_2"/>
</dbReference>
<dbReference type="PANTHER" id="PTHR32071:SF57">
    <property type="entry name" value="C4-DICARBOXYLATE TRANSPORT TRANSCRIPTIONAL REGULATORY PROTEIN DCTD"/>
    <property type="match status" value="1"/>
</dbReference>
<dbReference type="PANTHER" id="PTHR32071">
    <property type="entry name" value="TRANSCRIPTIONAL REGULATORY PROTEIN"/>
    <property type="match status" value="1"/>
</dbReference>
<dbReference type="Pfam" id="PF00158">
    <property type="entry name" value="Sigma54_activat"/>
    <property type="match status" value="1"/>
</dbReference>
<dbReference type="SMART" id="SM00382">
    <property type="entry name" value="AAA"/>
    <property type="match status" value="1"/>
</dbReference>
<dbReference type="SUPFAM" id="SSF52540">
    <property type="entry name" value="P-loop containing nucleoside triphosphate hydrolases"/>
    <property type="match status" value="1"/>
</dbReference>
<dbReference type="PROSITE" id="PS00675">
    <property type="entry name" value="SIGMA54_INTERACT_1"/>
    <property type="match status" value="1"/>
</dbReference>
<dbReference type="PROSITE" id="PS00676">
    <property type="entry name" value="SIGMA54_INTERACT_2"/>
    <property type="match status" value="1"/>
</dbReference>
<dbReference type="PROSITE" id="PS50045">
    <property type="entry name" value="SIGMA54_INTERACT_4"/>
    <property type="match status" value="1"/>
</dbReference>
<sequence>DQEIVVKSMAMEKVYELACRVADSDATIFLQGETGVGKEVLARTIHNSSIRKEAPFIKVNCGAIPESIMESELFGYSKGTFTGGNKDGKKGLAQAAHNGTLFLDEIGELPLNLQAKLLQLLNEKQFTPLGEIKPVQVDVRFIAATNRNLEDMVREGTFREDLYYRLFVIPITIPSLSERREDIPFLINHFLETFNHKYKLYKTIDKEVVQFFIDYEWKGNVRELQNTIERLVLISSAQQIELSDLSDKFKKATSHTKGGISGEGLNLKQKMEQFEKQILIQTLESSNTMKEASKN</sequence>
<accession>Q01265</accession>
<protein>
    <recommendedName>
        <fullName>Uncharacterized protein in HyuA 5'region</fullName>
    </recommendedName>
    <alternativeName>
        <fullName>ORF1</fullName>
    </alternativeName>
</protein>
<name>YHYA_PSESN</name>
<geneLocation type="plasmid">
    <name>pHN671</name>
</geneLocation>
<evidence type="ECO:0000255" key="1">
    <source>
        <dbReference type="PROSITE-ProRule" id="PRU00193"/>
    </source>
</evidence>